<accession>A6TNX0</accession>
<sequence length="789" mass="88575">MNEKSIRVLEYGKMIDRLEERCLSAMAKEKARELRPIQSFGEITQLQSETSEAQSILIQRGNIPLGGIHDIKQYLRKTEIGSYLDPKELLLVKDTLRTARNLKSFFKEGDDQTKHPIVSGLIQGLQSFRAIEDRIEICIVSDTEISDHASSTLKNIRRQISSKNDAVRNKLNGIINSSTTQKYLQDAIITMRQDRYVVPVKQEHRGNVPGLIHDQSSSGATLFVEPMAVVQLNNELRELKIKEHIEIERILMEIAEMIAQYATEMRNNQIILTAIDFVFAKGKLSLEMKGVEPLLNVEGNVHIKNGRHPLLNADEVVPTNLWIGETFQTLVITGPNTGGKTVTLKTLGLLSMMAQSGLHVPADYGTRLAIFDQIFADIGDEQSIEQSLSTFSSHMTNIVNIVEEVTSNSLVLFDELGAGTDPTEGAALGMAILNHLREMNVTTVATTHYSELKQYALTNEGVENASVEFDVATLSPTYRLLIGVPGKSNAFEISKKLGLPDGLVQRAKRFLSQDTIHFEDLLQNIEKNRRESEIERQEAKRIRLEAEKFAEGYEDRKQRLEAQRDQILRDAKKEAYRLVKEAKMDSEHIIKGLREMKFELEAKEMNKKMEDAKNQLTGKMNDLSDHHQQILNKKNKKPPKNLKPGDAVRILSLNQVGHVLNEVDPKGEVQVQAGIMKVNMHISNLERVSPEKDIQQSGTGKIMKSKTGDTKSEVDVRGKNLEEAMLEIDKYLDDSYIVGLTQVTIIHGVGTGVLKAGIKQMLKKNKHVRTHREGVYGEGGMGVTIVELK</sequence>
<feature type="chain" id="PRO_1000093338" description="Endonuclease MutS2">
    <location>
        <begin position="1"/>
        <end position="789"/>
    </location>
</feature>
<feature type="domain" description="Smr" evidence="1">
    <location>
        <begin position="714"/>
        <end position="789"/>
    </location>
</feature>
<feature type="region of interest" description="Disordered" evidence="2">
    <location>
        <begin position="690"/>
        <end position="714"/>
    </location>
</feature>
<feature type="binding site" evidence="1">
    <location>
        <begin position="334"/>
        <end position="341"/>
    </location>
    <ligand>
        <name>ATP</name>
        <dbReference type="ChEBI" id="CHEBI:30616"/>
    </ligand>
</feature>
<reference key="1">
    <citation type="journal article" date="2016" name="Genome Announc.">
        <title>Complete genome sequence of Alkaliphilus metalliredigens strain QYMF, an alkaliphilic and metal-reducing bacterium isolated from borax-contaminated leachate ponds.</title>
        <authorList>
            <person name="Hwang C."/>
            <person name="Copeland A."/>
            <person name="Lucas S."/>
            <person name="Lapidus A."/>
            <person name="Barry K."/>
            <person name="Detter J.C."/>
            <person name="Glavina Del Rio T."/>
            <person name="Hammon N."/>
            <person name="Israni S."/>
            <person name="Dalin E."/>
            <person name="Tice H."/>
            <person name="Pitluck S."/>
            <person name="Chertkov O."/>
            <person name="Brettin T."/>
            <person name="Bruce D."/>
            <person name="Han C."/>
            <person name="Schmutz J."/>
            <person name="Larimer F."/>
            <person name="Land M.L."/>
            <person name="Hauser L."/>
            <person name="Kyrpides N."/>
            <person name="Mikhailova N."/>
            <person name="Ye Q."/>
            <person name="Zhou J."/>
            <person name="Richardson P."/>
            <person name="Fields M.W."/>
        </authorList>
    </citation>
    <scope>NUCLEOTIDE SEQUENCE [LARGE SCALE GENOMIC DNA]</scope>
    <source>
        <strain>QYMF</strain>
    </source>
</reference>
<evidence type="ECO:0000255" key="1">
    <source>
        <dbReference type="HAMAP-Rule" id="MF_00092"/>
    </source>
</evidence>
<evidence type="ECO:0000256" key="2">
    <source>
        <dbReference type="SAM" id="MobiDB-lite"/>
    </source>
</evidence>
<proteinExistence type="inferred from homology"/>
<name>MUTS2_ALKMQ</name>
<protein>
    <recommendedName>
        <fullName evidence="1">Endonuclease MutS2</fullName>
        <ecNumber evidence="1">3.1.-.-</ecNumber>
    </recommendedName>
    <alternativeName>
        <fullName evidence="1">Ribosome-associated protein quality control-upstream factor</fullName>
        <shortName evidence="1">RQC-upstream factor</shortName>
        <shortName evidence="1">RqcU</shortName>
        <ecNumber evidence="1">3.6.4.-</ecNumber>
    </alternativeName>
</protein>
<comment type="function">
    <text evidence="1">Endonuclease that is involved in the suppression of homologous recombination and thus may have a key role in the control of bacterial genetic diversity.</text>
</comment>
<comment type="function">
    <text evidence="1">Acts as a ribosome collision sensor, splitting the ribosome into its 2 subunits. Detects stalled/collided 70S ribosomes which it binds and splits by an ATP-hydrolysis driven conformational change. Acts upstream of the ribosome quality control system (RQC), a ribosome-associated complex that mediates the extraction of incompletely synthesized nascent chains from stalled ribosomes and their subsequent degradation. Probably generates substrates for RQC.</text>
</comment>
<comment type="subunit">
    <text evidence="1">Homodimer. Binds to stalled ribosomes, contacting rRNA.</text>
</comment>
<comment type="similarity">
    <text evidence="1">Belongs to the DNA mismatch repair MutS family. MutS2 subfamily.</text>
</comment>
<gene>
    <name evidence="1" type="primary">mutS2</name>
    <name evidence="1" type="synonym">rqcU</name>
    <name type="ordered locus">Amet_1712</name>
</gene>
<organism>
    <name type="scientific">Alkaliphilus metalliredigens (strain QYMF)</name>
    <dbReference type="NCBI Taxonomy" id="293826"/>
    <lineage>
        <taxon>Bacteria</taxon>
        <taxon>Bacillati</taxon>
        <taxon>Bacillota</taxon>
        <taxon>Clostridia</taxon>
        <taxon>Peptostreptococcales</taxon>
        <taxon>Natronincolaceae</taxon>
        <taxon>Alkaliphilus</taxon>
    </lineage>
</organism>
<dbReference type="EC" id="3.1.-.-" evidence="1"/>
<dbReference type="EC" id="3.6.4.-" evidence="1"/>
<dbReference type="EMBL" id="CP000724">
    <property type="protein sequence ID" value="ABR47888.1"/>
    <property type="molecule type" value="Genomic_DNA"/>
</dbReference>
<dbReference type="RefSeq" id="WP_012062926.1">
    <property type="nucleotide sequence ID" value="NC_009633.1"/>
</dbReference>
<dbReference type="SMR" id="A6TNX0"/>
<dbReference type="STRING" id="293826.Amet_1712"/>
<dbReference type="KEGG" id="amt:Amet_1712"/>
<dbReference type="eggNOG" id="COG1193">
    <property type="taxonomic scope" value="Bacteria"/>
</dbReference>
<dbReference type="HOGENOM" id="CLU_011252_2_1_9"/>
<dbReference type="OrthoDB" id="9808166at2"/>
<dbReference type="Proteomes" id="UP000001572">
    <property type="component" value="Chromosome"/>
</dbReference>
<dbReference type="GO" id="GO:0005524">
    <property type="term" value="F:ATP binding"/>
    <property type="evidence" value="ECO:0007669"/>
    <property type="project" value="UniProtKB-UniRule"/>
</dbReference>
<dbReference type="GO" id="GO:0016887">
    <property type="term" value="F:ATP hydrolysis activity"/>
    <property type="evidence" value="ECO:0007669"/>
    <property type="project" value="InterPro"/>
</dbReference>
<dbReference type="GO" id="GO:0140664">
    <property type="term" value="F:ATP-dependent DNA damage sensor activity"/>
    <property type="evidence" value="ECO:0007669"/>
    <property type="project" value="InterPro"/>
</dbReference>
<dbReference type="GO" id="GO:0004519">
    <property type="term" value="F:endonuclease activity"/>
    <property type="evidence" value="ECO:0007669"/>
    <property type="project" value="UniProtKB-UniRule"/>
</dbReference>
<dbReference type="GO" id="GO:0030983">
    <property type="term" value="F:mismatched DNA binding"/>
    <property type="evidence" value="ECO:0007669"/>
    <property type="project" value="InterPro"/>
</dbReference>
<dbReference type="GO" id="GO:0043023">
    <property type="term" value="F:ribosomal large subunit binding"/>
    <property type="evidence" value="ECO:0007669"/>
    <property type="project" value="UniProtKB-UniRule"/>
</dbReference>
<dbReference type="GO" id="GO:0019843">
    <property type="term" value="F:rRNA binding"/>
    <property type="evidence" value="ECO:0007669"/>
    <property type="project" value="UniProtKB-UniRule"/>
</dbReference>
<dbReference type="GO" id="GO:0006298">
    <property type="term" value="P:mismatch repair"/>
    <property type="evidence" value="ECO:0007669"/>
    <property type="project" value="InterPro"/>
</dbReference>
<dbReference type="GO" id="GO:0045910">
    <property type="term" value="P:negative regulation of DNA recombination"/>
    <property type="evidence" value="ECO:0007669"/>
    <property type="project" value="InterPro"/>
</dbReference>
<dbReference type="GO" id="GO:0072344">
    <property type="term" value="P:rescue of stalled ribosome"/>
    <property type="evidence" value="ECO:0007669"/>
    <property type="project" value="UniProtKB-UniRule"/>
</dbReference>
<dbReference type="CDD" id="cd03280">
    <property type="entry name" value="ABC_MutS2"/>
    <property type="match status" value="1"/>
</dbReference>
<dbReference type="FunFam" id="3.40.50.300:FF:000830">
    <property type="entry name" value="Endonuclease MutS2"/>
    <property type="match status" value="1"/>
</dbReference>
<dbReference type="Gene3D" id="3.30.1370.110">
    <property type="match status" value="1"/>
</dbReference>
<dbReference type="Gene3D" id="3.40.50.300">
    <property type="entry name" value="P-loop containing nucleotide triphosphate hydrolases"/>
    <property type="match status" value="1"/>
</dbReference>
<dbReference type="HAMAP" id="MF_00092">
    <property type="entry name" value="MutS2"/>
    <property type="match status" value="1"/>
</dbReference>
<dbReference type="InterPro" id="IPR000432">
    <property type="entry name" value="DNA_mismatch_repair_MutS_C"/>
</dbReference>
<dbReference type="InterPro" id="IPR007696">
    <property type="entry name" value="DNA_mismatch_repair_MutS_core"/>
</dbReference>
<dbReference type="InterPro" id="IPR036187">
    <property type="entry name" value="DNA_mismatch_repair_MutS_sf"/>
</dbReference>
<dbReference type="InterPro" id="IPR046893">
    <property type="entry name" value="MSSS"/>
</dbReference>
<dbReference type="InterPro" id="IPR045076">
    <property type="entry name" value="MutS"/>
</dbReference>
<dbReference type="InterPro" id="IPR005747">
    <property type="entry name" value="MutS2"/>
</dbReference>
<dbReference type="InterPro" id="IPR027417">
    <property type="entry name" value="P-loop_NTPase"/>
</dbReference>
<dbReference type="InterPro" id="IPR002625">
    <property type="entry name" value="Smr_dom"/>
</dbReference>
<dbReference type="InterPro" id="IPR036063">
    <property type="entry name" value="Smr_dom_sf"/>
</dbReference>
<dbReference type="NCBIfam" id="TIGR01069">
    <property type="entry name" value="mutS2"/>
    <property type="match status" value="1"/>
</dbReference>
<dbReference type="PANTHER" id="PTHR48466:SF2">
    <property type="entry name" value="OS10G0509000 PROTEIN"/>
    <property type="match status" value="1"/>
</dbReference>
<dbReference type="PANTHER" id="PTHR48466">
    <property type="entry name" value="OS10G0509000 PROTEIN-RELATED"/>
    <property type="match status" value="1"/>
</dbReference>
<dbReference type="Pfam" id="PF20297">
    <property type="entry name" value="MSSS"/>
    <property type="match status" value="1"/>
</dbReference>
<dbReference type="Pfam" id="PF00488">
    <property type="entry name" value="MutS_V"/>
    <property type="match status" value="1"/>
</dbReference>
<dbReference type="Pfam" id="PF01713">
    <property type="entry name" value="Smr"/>
    <property type="match status" value="1"/>
</dbReference>
<dbReference type="PIRSF" id="PIRSF005814">
    <property type="entry name" value="MutS_YshD"/>
    <property type="match status" value="1"/>
</dbReference>
<dbReference type="SMART" id="SM00534">
    <property type="entry name" value="MUTSac"/>
    <property type="match status" value="1"/>
</dbReference>
<dbReference type="SMART" id="SM00533">
    <property type="entry name" value="MUTSd"/>
    <property type="match status" value="1"/>
</dbReference>
<dbReference type="SMART" id="SM00463">
    <property type="entry name" value="SMR"/>
    <property type="match status" value="1"/>
</dbReference>
<dbReference type="SUPFAM" id="SSF48334">
    <property type="entry name" value="DNA repair protein MutS, domain III"/>
    <property type="match status" value="1"/>
</dbReference>
<dbReference type="SUPFAM" id="SSF52540">
    <property type="entry name" value="P-loop containing nucleoside triphosphate hydrolases"/>
    <property type="match status" value="1"/>
</dbReference>
<dbReference type="SUPFAM" id="SSF160443">
    <property type="entry name" value="SMR domain-like"/>
    <property type="match status" value="1"/>
</dbReference>
<dbReference type="PROSITE" id="PS00486">
    <property type="entry name" value="DNA_MISMATCH_REPAIR_2"/>
    <property type="match status" value="1"/>
</dbReference>
<dbReference type="PROSITE" id="PS50828">
    <property type="entry name" value="SMR"/>
    <property type="match status" value="1"/>
</dbReference>
<keyword id="KW-0067">ATP-binding</keyword>
<keyword id="KW-0238">DNA-binding</keyword>
<keyword id="KW-0255">Endonuclease</keyword>
<keyword id="KW-0378">Hydrolase</keyword>
<keyword id="KW-0540">Nuclease</keyword>
<keyword id="KW-0547">Nucleotide-binding</keyword>
<keyword id="KW-1185">Reference proteome</keyword>
<keyword id="KW-0694">RNA-binding</keyword>
<keyword id="KW-0699">rRNA-binding</keyword>